<proteinExistence type="inferred from homology"/>
<organism>
    <name type="scientific">Staphylococcus aureus (strain MW2)</name>
    <dbReference type="NCBI Taxonomy" id="196620"/>
    <lineage>
        <taxon>Bacteria</taxon>
        <taxon>Bacillati</taxon>
        <taxon>Bacillota</taxon>
        <taxon>Bacilli</taxon>
        <taxon>Bacillales</taxon>
        <taxon>Staphylococcaceae</taxon>
        <taxon>Staphylococcus</taxon>
    </lineage>
</organism>
<keyword id="KW-0001">2Fe-2S</keyword>
<keyword id="KW-0004">4Fe-4S</keyword>
<keyword id="KW-0093">Biotin biosynthesis</keyword>
<keyword id="KW-0408">Iron</keyword>
<keyword id="KW-0411">Iron-sulfur</keyword>
<keyword id="KW-0479">Metal-binding</keyword>
<keyword id="KW-0949">S-adenosyl-L-methionine</keyword>
<keyword id="KW-0808">Transferase</keyword>
<comment type="function">
    <text evidence="1">Catalyzes the conversion of dethiobiotin (DTB) to biotin by the insertion of a sulfur atom into dethiobiotin via a radical-based mechanism.</text>
</comment>
<comment type="catalytic activity">
    <reaction evidence="1">
        <text>(4R,5S)-dethiobiotin + (sulfur carrier)-SH + 2 reduced [2Fe-2S]-[ferredoxin] + 2 S-adenosyl-L-methionine = (sulfur carrier)-H + biotin + 2 5'-deoxyadenosine + 2 L-methionine + 2 oxidized [2Fe-2S]-[ferredoxin]</text>
        <dbReference type="Rhea" id="RHEA:22060"/>
        <dbReference type="Rhea" id="RHEA-COMP:10000"/>
        <dbReference type="Rhea" id="RHEA-COMP:10001"/>
        <dbReference type="Rhea" id="RHEA-COMP:14737"/>
        <dbReference type="Rhea" id="RHEA-COMP:14739"/>
        <dbReference type="ChEBI" id="CHEBI:17319"/>
        <dbReference type="ChEBI" id="CHEBI:29917"/>
        <dbReference type="ChEBI" id="CHEBI:33737"/>
        <dbReference type="ChEBI" id="CHEBI:33738"/>
        <dbReference type="ChEBI" id="CHEBI:57586"/>
        <dbReference type="ChEBI" id="CHEBI:57844"/>
        <dbReference type="ChEBI" id="CHEBI:59789"/>
        <dbReference type="ChEBI" id="CHEBI:64428"/>
        <dbReference type="ChEBI" id="CHEBI:149473"/>
        <dbReference type="EC" id="2.8.1.6"/>
    </reaction>
</comment>
<comment type="cofactor">
    <cofactor evidence="1">
        <name>[4Fe-4S] cluster</name>
        <dbReference type="ChEBI" id="CHEBI:49883"/>
    </cofactor>
    <text evidence="1">Binds 1 [4Fe-4S] cluster. The cluster is coordinated with 3 cysteines and an exchangeable S-adenosyl-L-methionine.</text>
</comment>
<comment type="cofactor">
    <cofactor evidence="1">
        <name>[2Fe-2S] cluster</name>
        <dbReference type="ChEBI" id="CHEBI:190135"/>
    </cofactor>
    <text evidence="1">Binds 1 [2Fe-2S] cluster. The cluster is coordinated with 3 cysteines and 1 arginine.</text>
</comment>
<comment type="pathway">
    <text evidence="1">Cofactor biosynthesis; biotin biosynthesis; biotin from 7,8-diaminononanoate: step 2/2.</text>
</comment>
<comment type="subunit">
    <text evidence="1">Homodimer.</text>
</comment>
<comment type="similarity">
    <text evidence="1">Belongs to the radical SAM superfamily. Biotin synthase family.</text>
</comment>
<evidence type="ECO:0000255" key="1">
    <source>
        <dbReference type="HAMAP-Rule" id="MF_01694"/>
    </source>
</evidence>
<evidence type="ECO:0000255" key="2">
    <source>
        <dbReference type="PROSITE-ProRule" id="PRU01266"/>
    </source>
</evidence>
<name>BIOB_STAAW</name>
<gene>
    <name evidence="1" type="primary">bioB</name>
    <name type="ordered locus">MW2348</name>
</gene>
<accession>Q7A018</accession>
<protein>
    <recommendedName>
        <fullName evidence="1">Biotin synthase</fullName>
        <ecNumber evidence="1">2.8.1.6</ecNumber>
    </recommendedName>
</protein>
<feature type="chain" id="PRO_0000381655" description="Biotin synthase">
    <location>
        <begin position="1"/>
        <end position="335"/>
    </location>
</feature>
<feature type="domain" description="Radical SAM core" evidence="2">
    <location>
        <begin position="43"/>
        <end position="269"/>
    </location>
</feature>
<feature type="binding site" evidence="1">
    <location>
        <position position="61"/>
    </location>
    <ligand>
        <name>[4Fe-4S] cluster</name>
        <dbReference type="ChEBI" id="CHEBI:49883"/>
        <note>4Fe-4S-S-AdoMet</note>
    </ligand>
</feature>
<feature type="binding site" evidence="1">
    <location>
        <position position="65"/>
    </location>
    <ligand>
        <name>[4Fe-4S] cluster</name>
        <dbReference type="ChEBI" id="CHEBI:49883"/>
        <note>4Fe-4S-S-AdoMet</note>
    </ligand>
</feature>
<feature type="binding site" evidence="1">
    <location>
        <position position="68"/>
    </location>
    <ligand>
        <name>[4Fe-4S] cluster</name>
        <dbReference type="ChEBI" id="CHEBI:49883"/>
        <note>4Fe-4S-S-AdoMet</note>
    </ligand>
</feature>
<feature type="binding site" evidence="1">
    <location>
        <position position="104"/>
    </location>
    <ligand>
        <name>[2Fe-2S] cluster</name>
        <dbReference type="ChEBI" id="CHEBI:190135"/>
    </ligand>
</feature>
<feature type="binding site" evidence="1">
    <location>
        <position position="137"/>
    </location>
    <ligand>
        <name>[2Fe-2S] cluster</name>
        <dbReference type="ChEBI" id="CHEBI:190135"/>
    </ligand>
</feature>
<feature type="binding site" evidence="1">
    <location>
        <position position="197"/>
    </location>
    <ligand>
        <name>[2Fe-2S] cluster</name>
        <dbReference type="ChEBI" id="CHEBI:190135"/>
    </ligand>
</feature>
<feature type="binding site" evidence="1">
    <location>
        <position position="267"/>
    </location>
    <ligand>
        <name>[2Fe-2S] cluster</name>
        <dbReference type="ChEBI" id="CHEBI:190135"/>
    </ligand>
</feature>
<reference key="1">
    <citation type="journal article" date="2002" name="Lancet">
        <title>Genome and virulence determinants of high virulence community-acquired MRSA.</title>
        <authorList>
            <person name="Baba T."/>
            <person name="Takeuchi F."/>
            <person name="Kuroda M."/>
            <person name="Yuzawa H."/>
            <person name="Aoki K."/>
            <person name="Oguchi A."/>
            <person name="Nagai Y."/>
            <person name="Iwama N."/>
            <person name="Asano K."/>
            <person name="Naimi T."/>
            <person name="Kuroda H."/>
            <person name="Cui L."/>
            <person name="Yamamoto K."/>
            <person name="Hiramatsu K."/>
        </authorList>
    </citation>
    <scope>NUCLEOTIDE SEQUENCE [LARGE SCALE GENOMIC DNA]</scope>
    <source>
        <strain>MW2</strain>
    </source>
</reference>
<sequence length="335" mass="37545">MNLAKRILQGEQLTKETVLKIYEDTNIDTLDLLNEAYILRKHYFGKKVKLNMILNAKSGICPENCGYCGQSRDIKQKQRYALIPEEQIIDGAKVAHDNHIGTYCIVMSGRGPSDKEVDHISNTVRTIKSQHPQLKICACLGLTNDEQAKKLKSAGVDRYNHNINTSENYHDNVVTTHSYKDRTDTIELMKANNISPCSGVICGMGESNQDIVDMAFALKEMDADSIPINFLHPIKGTKFGSMDDLTPMKCLRIVALFRLINPTKEIRIAGGREVNLRSLQPLALKAANSIFVGDYLITGGQPNQLDYDMINDLGFEIDYDTCENKENKNDVSRAN</sequence>
<dbReference type="EC" id="2.8.1.6" evidence="1"/>
<dbReference type="EMBL" id="BA000033">
    <property type="protein sequence ID" value="BAB96213.1"/>
    <property type="molecule type" value="Genomic_DNA"/>
</dbReference>
<dbReference type="RefSeq" id="WP_001046645.1">
    <property type="nucleotide sequence ID" value="NC_003923.1"/>
</dbReference>
<dbReference type="SMR" id="Q7A018"/>
<dbReference type="KEGG" id="sam:MW2348"/>
<dbReference type="HOGENOM" id="CLU_033172_2_1_9"/>
<dbReference type="UniPathway" id="UPA00078">
    <property type="reaction ID" value="UER00162"/>
</dbReference>
<dbReference type="GO" id="GO:0051537">
    <property type="term" value="F:2 iron, 2 sulfur cluster binding"/>
    <property type="evidence" value="ECO:0007669"/>
    <property type="project" value="UniProtKB-KW"/>
</dbReference>
<dbReference type="GO" id="GO:0051539">
    <property type="term" value="F:4 iron, 4 sulfur cluster binding"/>
    <property type="evidence" value="ECO:0007669"/>
    <property type="project" value="UniProtKB-KW"/>
</dbReference>
<dbReference type="GO" id="GO:0004076">
    <property type="term" value="F:biotin synthase activity"/>
    <property type="evidence" value="ECO:0007669"/>
    <property type="project" value="UniProtKB-UniRule"/>
</dbReference>
<dbReference type="GO" id="GO:0005506">
    <property type="term" value="F:iron ion binding"/>
    <property type="evidence" value="ECO:0007669"/>
    <property type="project" value="UniProtKB-UniRule"/>
</dbReference>
<dbReference type="GO" id="GO:0009102">
    <property type="term" value="P:biotin biosynthetic process"/>
    <property type="evidence" value="ECO:0007669"/>
    <property type="project" value="UniProtKB-UniRule"/>
</dbReference>
<dbReference type="CDD" id="cd01335">
    <property type="entry name" value="Radical_SAM"/>
    <property type="match status" value="1"/>
</dbReference>
<dbReference type="FunFam" id="3.20.20.70:FF:000026">
    <property type="entry name" value="Biotin synthase"/>
    <property type="match status" value="1"/>
</dbReference>
<dbReference type="Gene3D" id="3.20.20.70">
    <property type="entry name" value="Aldolase class I"/>
    <property type="match status" value="1"/>
</dbReference>
<dbReference type="HAMAP" id="MF_01694">
    <property type="entry name" value="BioB"/>
    <property type="match status" value="1"/>
</dbReference>
<dbReference type="InterPro" id="IPR013785">
    <property type="entry name" value="Aldolase_TIM"/>
</dbReference>
<dbReference type="InterPro" id="IPR010722">
    <property type="entry name" value="BATS_dom"/>
</dbReference>
<dbReference type="InterPro" id="IPR002684">
    <property type="entry name" value="Biotin_synth/BioAB"/>
</dbReference>
<dbReference type="InterPro" id="IPR024177">
    <property type="entry name" value="Biotin_synthase"/>
</dbReference>
<dbReference type="InterPro" id="IPR006638">
    <property type="entry name" value="Elp3/MiaA/NifB-like_rSAM"/>
</dbReference>
<dbReference type="InterPro" id="IPR007197">
    <property type="entry name" value="rSAM"/>
</dbReference>
<dbReference type="NCBIfam" id="TIGR00433">
    <property type="entry name" value="bioB"/>
    <property type="match status" value="1"/>
</dbReference>
<dbReference type="PANTHER" id="PTHR22976">
    <property type="entry name" value="BIOTIN SYNTHASE"/>
    <property type="match status" value="1"/>
</dbReference>
<dbReference type="PANTHER" id="PTHR22976:SF2">
    <property type="entry name" value="BIOTIN SYNTHASE, MITOCHONDRIAL"/>
    <property type="match status" value="1"/>
</dbReference>
<dbReference type="Pfam" id="PF06968">
    <property type="entry name" value="BATS"/>
    <property type="match status" value="1"/>
</dbReference>
<dbReference type="Pfam" id="PF04055">
    <property type="entry name" value="Radical_SAM"/>
    <property type="match status" value="1"/>
</dbReference>
<dbReference type="PIRSF" id="PIRSF001619">
    <property type="entry name" value="Biotin_synth"/>
    <property type="match status" value="1"/>
</dbReference>
<dbReference type="SFLD" id="SFLDG01060">
    <property type="entry name" value="BATS_domain_containing"/>
    <property type="match status" value="1"/>
</dbReference>
<dbReference type="SFLD" id="SFLDG01278">
    <property type="entry name" value="biotin_synthase_like"/>
    <property type="match status" value="1"/>
</dbReference>
<dbReference type="SMART" id="SM00876">
    <property type="entry name" value="BATS"/>
    <property type="match status" value="1"/>
</dbReference>
<dbReference type="SMART" id="SM00729">
    <property type="entry name" value="Elp3"/>
    <property type="match status" value="1"/>
</dbReference>
<dbReference type="SUPFAM" id="SSF102114">
    <property type="entry name" value="Radical SAM enzymes"/>
    <property type="match status" value="1"/>
</dbReference>
<dbReference type="PROSITE" id="PS51918">
    <property type="entry name" value="RADICAL_SAM"/>
    <property type="match status" value="1"/>
</dbReference>